<proteinExistence type="evidence at protein level"/>
<sequence>MQEYHIHNLDCPDCASKLERDLNELDYVKKAQINFSTSKLFLDTSDFEKVKAFIKQNEPHLSLSFKEATEKPLSFTPLIITIMVFLGAILILHLNPSPLIEKAMFFVLALVYLVSGKDVILGAFRGLRKGQFFDENALMLIATIAAFFVGAYEESVSIMVFYSAGEFLQKLAVSRSKKSLKALVDVAPNLAYLKKGDELVSVAPEDLRVNDIVVVKVGEKVPVDGVVVKGESLLDERALSGESMPVNVSENSKVLGGSLNLKAVLEIQVEKMYKDSSIAKVVDLVQQATNEKSETEKFITKFSRYYTPSVLFIALMIAVLPPLFSMGSFDEWIYRGLVALMVSCPCALVISVPLGYFGGVGAASRKGILMKGVHVLEVLTQAKSIAFDKTGTLTKGVFKVTDIVPQNGHSKEEVLHYASCSQLLSTHPIALSIQKACEEMLKDDKHQHDIKNYEEVSGMGVKAQCHTDLIIAGNEKMLDQFHIAHSPSKENGTIVHVAFNQTYVGYIVISDEIKDDAIECLRDLKVQGIENFCILSGDRKSATESIAQTLGCEYHASLLPEEKTSVFKTFKERYKAPAIFVGDGINDAPTLASADVGIGMGKGSELSKQSADIVITNDSLNSLVKVLAIAKKTKSIIWQNILFALGIKAVFIVLGLMGVASLWEAVFGDVGVTLLALANSMRAMRA</sequence>
<evidence type="ECO:0000250" key="1"/>
<evidence type="ECO:0000255" key="2">
    <source>
        <dbReference type="PROSITE-ProRule" id="PRU00280"/>
    </source>
</evidence>
<evidence type="ECO:0000269" key="3">
    <source>
    </source>
</evidence>
<evidence type="ECO:0000305" key="4"/>
<protein>
    <recommendedName>
        <fullName>Cadmium, zinc and cobalt-transporting ATPase</fullName>
        <ecNumber>7.2.2.12</ecNumber>
        <ecNumber>7.2.2.21</ecNumber>
    </recommendedName>
</protein>
<keyword id="KW-0067">ATP-binding</keyword>
<keyword id="KW-0104">Cadmium</keyword>
<keyword id="KW-1003">Cell membrane</keyword>
<keyword id="KW-0170">Cobalt</keyword>
<keyword id="KW-0460">Magnesium</keyword>
<keyword id="KW-0472">Membrane</keyword>
<keyword id="KW-0479">Metal-binding</keyword>
<keyword id="KW-0547">Nucleotide-binding</keyword>
<keyword id="KW-0597">Phosphoprotein</keyword>
<keyword id="KW-1185">Reference proteome</keyword>
<keyword id="KW-1278">Translocase</keyword>
<keyword id="KW-0812">Transmembrane</keyword>
<keyword id="KW-1133">Transmembrane helix</keyword>
<keyword id="KW-0862">Zinc</keyword>
<dbReference type="EC" id="7.2.2.12"/>
<dbReference type="EC" id="7.2.2.21"/>
<dbReference type="EMBL" id="L46864">
    <property type="protein sequence ID" value="AAA93043.1"/>
    <property type="molecule type" value="Genomic_DNA"/>
</dbReference>
<dbReference type="EMBL" id="AE000511">
    <property type="protein sequence ID" value="AAD07839.1"/>
    <property type="molecule type" value="Genomic_DNA"/>
</dbReference>
<dbReference type="PIR" id="G64618">
    <property type="entry name" value="G64618"/>
</dbReference>
<dbReference type="RefSeq" id="NP_207584.1">
    <property type="nucleotide sequence ID" value="NC_000915.1"/>
</dbReference>
<dbReference type="RefSeq" id="WP_001158808.1">
    <property type="nucleotide sequence ID" value="NC_018939.1"/>
</dbReference>
<dbReference type="SMR" id="Q59465"/>
<dbReference type="DIP" id="DIP-3082N"/>
<dbReference type="FunCoup" id="Q59465">
    <property type="interactions" value="81"/>
</dbReference>
<dbReference type="IntAct" id="Q59465">
    <property type="interactions" value="3"/>
</dbReference>
<dbReference type="MINT" id="Q59465"/>
<dbReference type="STRING" id="85962.HP_0791"/>
<dbReference type="TCDB" id="3.A.3.6.3">
    <property type="family name" value="the p-type atpase (p-atpase) superfamily"/>
</dbReference>
<dbReference type="PaxDb" id="85962-C694_04055"/>
<dbReference type="DNASU" id="899347"/>
<dbReference type="EnsemblBacteria" id="AAD07839">
    <property type="protein sequence ID" value="AAD07839"/>
    <property type="gene ID" value="HP_0791"/>
</dbReference>
<dbReference type="KEGG" id="heo:C694_04055"/>
<dbReference type="KEGG" id="hpy:HP_0791"/>
<dbReference type="PATRIC" id="fig|85962.47.peg.843"/>
<dbReference type="eggNOG" id="COG2217">
    <property type="taxonomic scope" value="Bacteria"/>
</dbReference>
<dbReference type="InParanoid" id="Q59465"/>
<dbReference type="OrthoDB" id="2490525at2"/>
<dbReference type="PhylomeDB" id="Q59465"/>
<dbReference type="Proteomes" id="UP000000429">
    <property type="component" value="Chromosome"/>
</dbReference>
<dbReference type="GO" id="GO:0016020">
    <property type="term" value="C:membrane"/>
    <property type="evidence" value="ECO:0000318"/>
    <property type="project" value="GO_Central"/>
</dbReference>
<dbReference type="GO" id="GO:0005886">
    <property type="term" value="C:plasma membrane"/>
    <property type="evidence" value="ECO:0007669"/>
    <property type="project" value="UniProtKB-SubCell"/>
</dbReference>
<dbReference type="GO" id="GO:0005524">
    <property type="term" value="F:ATP binding"/>
    <property type="evidence" value="ECO:0007669"/>
    <property type="project" value="UniProtKB-KW"/>
</dbReference>
<dbReference type="GO" id="GO:0016887">
    <property type="term" value="F:ATP hydrolysis activity"/>
    <property type="evidence" value="ECO:0007669"/>
    <property type="project" value="InterPro"/>
</dbReference>
<dbReference type="GO" id="GO:0015086">
    <property type="term" value="F:cadmium ion transmembrane transporter activity"/>
    <property type="evidence" value="ECO:0000318"/>
    <property type="project" value="GO_Central"/>
</dbReference>
<dbReference type="GO" id="GO:0046872">
    <property type="term" value="F:metal ion binding"/>
    <property type="evidence" value="ECO:0007669"/>
    <property type="project" value="UniProtKB-KW"/>
</dbReference>
<dbReference type="GO" id="GO:0008551">
    <property type="term" value="F:P-type cadmium transporter activity"/>
    <property type="evidence" value="ECO:0007669"/>
    <property type="project" value="UniProtKB-EC"/>
</dbReference>
<dbReference type="GO" id="GO:0016463">
    <property type="term" value="F:P-type zinc transporter activity"/>
    <property type="evidence" value="ECO:0007669"/>
    <property type="project" value="UniProtKB-EC"/>
</dbReference>
<dbReference type="GO" id="GO:0030001">
    <property type="term" value="P:metal ion transport"/>
    <property type="evidence" value="ECO:0000315"/>
    <property type="project" value="CACAO"/>
</dbReference>
<dbReference type="GO" id="GO:0055085">
    <property type="term" value="P:transmembrane transport"/>
    <property type="evidence" value="ECO:0000318"/>
    <property type="project" value="GO_Central"/>
</dbReference>
<dbReference type="CDD" id="cd00371">
    <property type="entry name" value="HMA"/>
    <property type="match status" value="1"/>
</dbReference>
<dbReference type="CDD" id="cd07548">
    <property type="entry name" value="P-type_ATPase-Cd_Zn_Co_like"/>
    <property type="match status" value="1"/>
</dbReference>
<dbReference type="FunFam" id="3.40.1110.10:FF:000066">
    <property type="entry name" value="Cadmium-translocating P-type ATPase"/>
    <property type="match status" value="1"/>
</dbReference>
<dbReference type="FunFam" id="2.70.150.10:FF:000002">
    <property type="entry name" value="Copper-transporting ATPase 1, putative"/>
    <property type="match status" value="1"/>
</dbReference>
<dbReference type="Gene3D" id="3.30.70.100">
    <property type="match status" value="1"/>
</dbReference>
<dbReference type="Gene3D" id="3.40.1110.10">
    <property type="entry name" value="Calcium-transporting ATPase, cytoplasmic domain N"/>
    <property type="match status" value="1"/>
</dbReference>
<dbReference type="Gene3D" id="2.70.150.10">
    <property type="entry name" value="Calcium-transporting ATPase, cytoplasmic transduction domain A"/>
    <property type="match status" value="1"/>
</dbReference>
<dbReference type="Gene3D" id="3.40.50.1000">
    <property type="entry name" value="HAD superfamily/HAD-like"/>
    <property type="match status" value="1"/>
</dbReference>
<dbReference type="InterPro" id="IPR023299">
    <property type="entry name" value="ATPase_P-typ_cyto_dom_N"/>
</dbReference>
<dbReference type="InterPro" id="IPR018303">
    <property type="entry name" value="ATPase_P-typ_P_site"/>
</dbReference>
<dbReference type="InterPro" id="IPR023298">
    <property type="entry name" value="ATPase_P-typ_TM_dom_sf"/>
</dbReference>
<dbReference type="InterPro" id="IPR008250">
    <property type="entry name" value="ATPase_P-typ_transduc_dom_A_sf"/>
</dbReference>
<dbReference type="InterPro" id="IPR051014">
    <property type="entry name" value="Cation_Transport_ATPase_IB"/>
</dbReference>
<dbReference type="InterPro" id="IPR036412">
    <property type="entry name" value="HAD-like_sf"/>
</dbReference>
<dbReference type="InterPro" id="IPR023214">
    <property type="entry name" value="HAD_sf"/>
</dbReference>
<dbReference type="InterPro" id="IPR017969">
    <property type="entry name" value="Heavy-metal-associated_CS"/>
</dbReference>
<dbReference type="InterPro" id="IPR006121">
    <property type="entry name" value="HMA_dom"/>
</dbReference>
<dbReference type="InterPro" id="IPR036163">
    <property type="entry name" value="HMA_dom_sf"/>
</dbReference>
<dbReference type="InterPro" id="IPR027256">
    <property type="entry name" value="P-typ_ATPase_IB"/>
</dbReference>
<dbReference type="InterPro" id="IPR001757">
    <property type="entry name" value="P_typ_ATPase"/>
</dbReference>
<dbReference type="InterPro" id="IPR044492">
    <property type="entry name" value="P_typ_ATPase_HD_dom"/>
</dbReference>
<dbReference type="NCBIfam" id="TIGR01512">
    <property type="entry name" value="ATPase-IB2_Cd"/>
    <property type="match status" value="1"/>
</dbReference>
<dbReference type="NCBIfam" id="TIGR01525">
    <property type="entry name" value="ATPase-IB_hvy"/>
    <property type="match status" value="1"/>
</dbReference>
<dbReference type="NCBIfam" id="TIGR01494">
    <property type="entry name" value="ATPase_P-type"/>
    <property type="match status" value="1"/>
</dbReference>
<dbReference type="PANTHER" id="PTHR48085">
    <property type="entry name" value="CADMIUM/ZINC-TRANSPORTING ATPASE HMA2-RELATED"/>
    <property type="match status" value="1"/>
</dbReference>
<dbReference type="PANTHER" id="PTHR48085:SF5">
    <property type="entry name" value="CADMIUM_ZINC-TRANSPORTING ATPASE HMA4-RELATED"/>
    <property type="match status" value="1"/>
</dbReference>
<dbReference type="Pfam" id="PF00122">
    <property type="entry name" value="E1-E2_ATPase"/>
    <property type="match status" value="1"/>
</dbReference>
<dbReference type="Pfam" id="PF00403">
    <property type="entry name" value="HMA"/>
    <property type="match status" value="1"/>
</dbReference>
<dbReference type="Pfam" id="PF00702">
    <property type="entry name" value="Hydrolase"/>
    <property type="match status" value="1"/>
</dbReference>
<dbReference type="PRINTS" id="PR00119">
    <property type="entry name" value="CATATPASE"/>
</dbReference>
<dbReference type="PRINTS" id="PR00941">
    <property type="entry name" value="CDATPASE"/>
</dbReference>
<dbReference type="SFLD" id="SFLDS00003">
    <property type="entry name" value="Haloacid_Dehalogenase"/>
    <property type="match status" value="1"/>
</dbReference>
<dbReference type="SFLD" id="SFLDF00027">
    <property type="entry name" value="p-type_atpase"/>
    <property type="match status" value="1"/>
</dbReference>
<dbReference type="SUPFAM" id="SSF81653">
    <property type="entry name" value="Calcium ATPase, transduction domain A"/>
    <property type="match status" value="1"/>
</dbReference>
<dbReference type="SUPFAM" id="SSF81665">
    <property type="entry name" value="Calcium ATPase, transmembrane domain M"/>
    <property type="match status" value="1"/>
</dbReference>
<dbReference type="SUPFAM" id="SSF56784">
    <property type="entry name" value="HAD-like"/>
    <property type="match status" value="1"/>
</dbReference>
<dbReference type="SUPFAM" id="SSF55008">
    <property type="entry name" value="HMA, heavy metal-associated domain"/>
    <property type="match status" value="1"/>
</dbReference>
<dbReference type="PROSITE" id="PS00154">
    <property type="entry name" value="ATPASE_E1_E2"/>
    <property type="match status" value="1"/>
</dbReference>
<dbReference type="PROSITE" id="PS01047">
    <property type="entry name" value="HMA_1"/>
    <property type="match status" value="1"/>
</dbReference>
<dbReference type="PROSITE" id="PS50846">
    <property type="entry name" value="HMA_2"/>
    <property type="match status" value="1"/>
</dbReference>
<reference key="1">
    <citation type="journal article" date="1996" name="J. Biol. Chem.">
        <title>Cloning and membrane topology of a P type ATPase from Helicobacter pylori.</title>
        <authorList>
            <person name="Melchers K."/>
            <person name="Weitzenegger T."/>
            <person name="Buhmann A."/>
            <person name="Steinhilber W."/>
            <person name="Sachs G."/>
            <person name="Schaefer K.P."/>
        </authorList>
    </citation>
    <scope>NUCLEOTIDE SEQUENCE [GENOMIC DNA]</scope>
    <source>
        <strain>69A</strain>
    </source>
</reference>
<reference key="2">
    <citation type="journal article" date="1997" name="Nature">
        <title>The complete genome sequence of the gastric pathogen Helicobacter pylori.</title>
        <authorList>
            <person name="Tomb J.-F."/>
            <person name="White O."/>
            <person name="Kerlavage A.R."/>
            <person name="Clayton R.A."/>
            <person name="Sutton G.G."/>
            <person name="Fleischmann R.D."/>
            <person name="Ketchum K.A."/>
            <person name="Klenk H.-P."/>
            <person name="Gill S.R."/>
            <person name="Dougherty B.A."/>
            <person name="Nelson K.E."/>
            <person name="Quackenbush J."/>
            <person name="Zhou L."/>
            <person name="Kirkness E.F."/>
            <person name="Peterson S.N."/>
            <person name="Loftus B.J."/>
            <person name="Richardson D.L."/>
            <person name="Dodson R.J."/>
            <person name="Khalak H.G."/>
            <person name="Glodek A."/>
            <person name="McKenney K."/>
            <person name="FitzGerald L.M."/>
            <person name="Lee N."/>
            <person name="Adams M.D."/>
            <person name="Hickey E.K."/>
            <person name="Berg D.E."/>
            <person name="Gocayne J.D."/>
            <person name="Utterback T.R."/>
            <person name="Peterson J.D."/>
            <person name="Kelley J.M."/>
            <person name="Cotton M.D."/>
            <person name="Weidman J.F."/>
            <person name="Fujii C."/>
            <person name="Bowman C."/>
            <person name="Watthey L."/>
            <person name="Wallin E."/>
            <person name="Hayes W.S."/>
            <person name="Borodovsky M."/>
            <person name="Karp P.D."/>
            <person name="Smith H.O."/>
            <person name="Fraser C.M."/>
            <person name="Venter J.C."/>
        </authorList>
    </citation>
    <scope>NUCLEOTIDE SEQUENCE [LARGE SCALE GENOMIC DNA]</scope>
    <source>
        <strain>ATCC 700392 / 26695</strain>
    </source>
</reference>
<reference key="3">
    <citation type="journal article" date="1999" name="Mol. Microbiol.">
        <title>Helicobacter pylori cadA encodes an essential Cd(II)-Zn(II)-Co(II) resistance factor influencing urease activity.</title>
        <authorList>
            <person name="Herrmann L."/>
            <person name="Schwan D."/>
            <person name="Garner R."/>
            <person name="Mobley H.L."/>
            <person name="Haas R."/>
            <person name="Schaefer K.P."/>
            <person name="Melchers K."/>
        </authorList>
    </citation>
    <scope>TOPOLOGY</scope>
    <source>
        <strain>69A</strain>
    </source>
</reference>
<reference key="4">
    <citation type="journal article" date="1999" name="Res. Microbiol.">
        <title>Membrane topology of CadA homologous P-type ATPase of Helicobacter pylori as determined by expression of phoA fusions in Escherichia coli and the positive inside rule.</title>
        <authorList>
            <person name="Melchers K."/>
            <person name="Schuhmacher A."/>
            <person name="Buhmann A."/>
            <person name="Weitzenegger T."/>
            <person name="Belin D."/>
            <person name="Grau S."/>
            <person name="Ehrmann M."/>
        </authorList>
    </citation>
    <scope>SUBSTRATE SPECIFICITY</scope>
    <source>
        <strain>69A</strain>
    </source>
</reference>
<comment type="function">
    <text>Couples the hydrolysis of ATP with the transport of cadmium, zinc and cobalt out of the cell. This ion efflux may influence the activity of urease, which is essential for the survival of the bacterium in the gastric environment.</text>
</comment>
<comment type="catalytic activity">
    <reaction>
        <text>Zn(2+)(in) + ATP + H2O = Zn(2+)(out) + ADP + phosphate + H(+)</text>
        <dbReference type="Rhea" id="RHEA:20621"/>
        <dbReference type="ChEBI" id="CHEBI:15377"/>
        <dbReference type="ChEBI" id="CHEBI:15378"/>
        <dbReference type="ChEBI" id="CHEBI:29105"/>
        <dbReference type="ChEBI" id="CHEBI:30616"/>
        <dbReference type="ChEBI" id="CHEBI:43474"/>
        <dbReference type="ChEBI" id="CHEBI:456216"/>
        <dbReference type="EC" id="7.2.2.12"/>
    </reaction>
</comment>
<comment type="catalytic activity">
    <reaction>
        <text>Cd(2+)(in) + ATP + H2O = Cd(2+)(out) + ADP + phosphate + H(+)</text>
        <dbReference type="Rhea" id="RHEA:12132"/>
        <dbReference type="ChEBI" id="CHEBI:15377"/>
        <dbReference type="ChEBI" id="CHEBI:15378"/>
        <dbReference type="ChEBI" id="CHEBI:30616"/>
        <dbReference type="ChEBI" id="CHEBI:43474"/>
        <dbReference type="ChEBI" id="CHEBI:48775"/>
        <dbReference type="ChEBI" id="CHEBI:456216"/>
        <dbReference type="EC" id="7.2.2.21"/>
    </reaction>
</comment>
<comment type="subcellular location">
    <subcellularLocation>
        <location>Cell membrane</location>
        <topology>Multi-pass membrane protein</topology>
    </subcellularLocation>
</comment>
<comment type="similarity">
    <text evidence="4">Belongs to the cation transport ATPase (P-type) (TC 3.A.3) family. Type IB subfamily.</text>
</comment>
<name>HMCT_HELPY</name>
<gene>
    <name type="primary">cadA</name>
    <name type="ordered locus">HP_0791</name>
</gene>
<accession>Q59465</accession>
<feature type="chain" id="PRO_0000046176" description="Cadmium, zinc and cobalt-transporting ATPase">
    <location>
        <begin position="1"/>
        <end position="686"/>
    </location>
</feature>
<feature type="topological domain" description="Cytoplasmic" evidence="3">
    <location>
        <begin position="1"/>
        <end position="72"/>
    </location>
</feature>
<feature type="transmembrane region" description="Helical; Name=1">
    <location>
        <begin position="73"/>
        <end position="92"/>
    </location>
</feature>
<feature type="topological domain" description="Extracellular" evidence="3">
    <location>
        <begin position="93"/>
        <end position="102"/>
    </location>
</feature>
<feature type="transmembrane region" description="Helical; Name=2">
    <location>
        <begin position="103"/>
        <end position="124"/>
    </location>
</feature>
<feature type="topological domain" description="Cytoplasmic" evidence="3">
    <location>
        <begin position="125"/>
        <end position="131"/>
    </location>
</feature>
<feature type="transmembrane region" description="Helical; Name=3">
    <location>
        <begin position="132"/>
        <end position="151"/>
    </location>
</feature>
<feature type="topological domain" description="Extracellular" evidence="3">
    <location>
        <begin position="152"/>
        <end position="154"/>
    </location>
</feature>
<feature type="transmembrane region" description="Helical; Name=4">
    <location>
        <begin position="155"/>
        <end position="174"/>
    </location>
</feature>
<feature type="topological domain" description="Cytoplasmic" evidence="3">
    <location>
        <begin position="175"/>
        <end position="308"/>
    </location>
</feature>
<feature type="transmembrane region" description="Helical; Name=5">
    <location>
        <begin position="309"/>
        <end position="327"/>
    </location>
</feature>
<feature type="topological domain" description="Extracellular" evidence="3">
    <location>
        <begin position="328"/>
        <end position="332"/>
    </location>
</feature>
<feature type="transmembrane region" description="Helical; Name=6">
    <location>
        <begin position="333"/>
        <end position="350"/>
    </location>
</feature>
<feature type="topological domain" description="Cytoplasmic" evidence="3">
    <location>
        <begin position="351"/>
        <end position="635"/>
    </location>
</feature>
<feature type="transmembrane region" description="Helical; Name=7">
    <location>
        <begin position="636"/>
        <end position="657"/>
    </location>
</feature>
<feature type="topological domain" description="Extracellular" evidence="3">
    <location>
        <begin position="658"/>
        <end position="665"/>
    </location>
</feature>
<feature type="transmembrane region" description="Helical; Name=8">
    <location>
        <begin position="666"/>
        <end position="681"/>
    </location>
</feature>
<feature type="topological domain" description="Cytoplasmic" evidence="3">
    <location>
        <begin position="682"/>
        <end position="686"/>
    </location>
</feature>
<feature type="domain" description="HMA" evidence="2">
    <location>
        <begin position="1"/>
        <end position="62"/>
    </location>
</feature>
<feature type="active site" description="4-aspartylphosphate intermediate" evidence="1">
    <location>
        <position position="388"/>
    </location>
</feature>
<feature type="binding site" evidence="2">
    <location>
        <position position="11"/>
    </location>
    <ligand>
        <name>Cd(2+)</name>
        <dbReference type="ChEBI" id="CHEBI:48775"/>
    </ligand>
</feature>
<feature type="binding site" evidence="2">
    <location>
        <position position="11"/>
    </location>
    <ligand>
        <name>Co(2+)</name>
        <dbReference type="ChEBI" id="CHEBI:48828"/>
    </ligand>
</feature>
<feature type="binding site" evidence="2">
    <location>
        <position position="11"/>
    </location>
    <ligand>
        <name>Zn(2+)</name>
        <dbReference type="ChEBI" id="CHEBI:29105"/>
    </ligand>
</feature>
<feature type="binding site" evidence="2">
    <location>
        <position position="14"/>
    </location>
    <ligand>
        <name>Cd(2+)</name>
        <dbReference type="ChEBI" id="CHEBI:48775"/>
    </ligand>
</feature>
<feature type="binding site" evidence="2">
    <location>
        <position position="14"/>
    </location>
    <ligand>
        <name>Co(2+)</name>
        <dbReference type="ChEBI" id="CHEBI:48828"/>
    </ligand>
</feature>
<feature type="binding site" evidence="2">
    <location>
        <position position="14"/>
    </location>
    <ligand>
        <name>Zn(2+)</name>
        <dbReference type="ChEBI" id="CHEBI:29105"/>
    </ligand>
</feature>
<feature type="binding site">
    <location>
        <position position="583"/>
    </location>
    <ligand>
        <name>Mg(2+)</name>
        <dbReference type="ChEBI" id="CHEBI:18420"/>
    </ligand>
</feature>
<feature type="binding site">
    <location>
        <position position="587"/>
    </location>
    <ligand>
        <name>Mg(2+)</name>
        <dbReference type="ChEBI" id="CHEBI:18420"/>
    </ligand>
</feature>
<feature type="sequence variant" description="In strain: 69A.">
    <original>E</original>
    <variation>K</variation>
    <location>
        <position position="24"/>
    </location>
</feature>
<feature type="sequence variant" description="In strain: 69A.">
    <original>K</original>
    <variation>R</variation>
    <location>
        <position position="39"/>
    </location>
</feature>
<feature type="sequence variant" description="In strain: 69A.">
    <original>T</original>
    <variation>A</variation>
    <location>
        <position position="69"/>
    </location>
</feature>
<feature type="sequence variant" description="In strain: 69A.">
    <original>I</original>
    <variation>V</variation>
    <location>
        <position position="80"/>
    </location>
</feature>
<feature type="sequence variant" description="In strain: 69A.">
    <original>M</original>
    <variation>A</variation>
    <location>
        <position position="83"/>
    </location>
</feature>
<feature type="sequence variant" description="In strain: 69A.">
    <original>F</original>
    <variation>C</variation>
    <location>
        <position position="148"/>
    </location>
</feature>
<feature type="sequence variant" description="In strain: 69A.">
    <original>VS</original>
    <variation>IA</variation>
    <location>
        <begin position="173"/>
        <end position="174"/>
    </location>
</feature>
<feature type="sequence variant" description="In strain: 69A.">
    <original>E</original>
    <variation>A</variation>
    <location>
        <position position="198"/>
    </location>
</feature>
<feature type="sequence variant" description="In strain: 69A.">
    <original>V</original>
    <variation>I</variation>
    <location>
        <position position="209"/>
    </location>
</feature>
<feature type="sequence variant" description="In strain: 69A.">
    <original>V</original>
    <variation>I</variation>
    <location>
        <position position="228"/>
    </location>
</feature>
<feature type="sequence variant" description="In strain: 69A.">
    <original>N</original>
    <variation>R</variation>
    <location>
        <position position="251"/>
    </location>
</feature>
<feature type="sequence variant" description="In strain: 69A.">
    <original>K</original>
    <variation>E</variation>
    <location>
        <position position="435"/>
    </location>
</feature>
<feature type="sequence variant" description="In strain: 69A.">
    <original>V</original>
    <variation>L</variation>
    <location>
        <position position="456"/>
    </location>
</feature>
<feature type="sequence variant" description="In strain: 69A.">
    <original>V</original>
    <variation>I</variation>
    <location>
        <position position="504"/>
    </location>
</feature>
<feature type="sequence variant" description="In strain: 69A.">
    <original>V</original>
    <variation>A</variation>
    <location>
        <position position="526"/>
    </location>
</feature>
<feature type="sequence variant" description="In strain: 69A.">
    <original>H</original>
    <variation>Y</variation>
    <location>
        <position position="555"/>
    </location>
</feature>
<organism>
    <name type="scientific">Helicobacter pylori (strain ATCC 700392 / 26695)</name>
    <name type="common">Campylobacter pylori</name>
    <dbReference type="NCBI Taxonomy" id="85962"/>
    <lineage>
        <taxon>Bacteria</taxon>
        <taxon>Pseudomonadati</taxon>
        <taxon>Campylobacterota</taxon>
        <taxon>Epsilonproteobacteria</taxon>
        <taxon>Campylobacterales</taxon>
        <taxon>Helicobacteraceae</taxon>
        <taxon>Helicobacter</taxon>
    </lineage>
</organism>